<comment type="function">
    <text evidence="1">Produces ATP from ADP in the presence of a proton gradient across the membrane. The gamma chain is believed to be important in regulating ATPase activity and the flow of protons through the CF(0) complex.</text>
</comment>
<comment type="subunit">
    <text evidence="1">F-type ATPases have 2 components, CF(1) - the catalytic core - and CF(0) - the membrane proton channel. CF(1) has five subunits: alpha(3), beta(3), gamma(1), delta(1), epsilon(1). CF(0) has three main subunits: a, b and c.</text>
</comment>
<comment type="subcellular location">
    <subcellularLocation>
        <location evidence="1">Cell membrane</location>
        <topology evidence="1">Peripheral membrane protein</topology>
    </subcellularLocation>
</comment>
<comment type="similarity">
    <text evidence="1">Belongs to the ATPase gamma chain family.</text>
</comment>
<sequence length="291" mass="31901">MAGSLSEIKAKIISTEKTSKITSAMRMVSSAKLVKSEQAARDFQIYASKIRQITTDLLKSDLTTGSDNPMLVSRPVKKTGYIVITSDKGLVGGYNSKILKSIMDMIQEYHAAGDYEIISIGSIGSDFFKARGMNVAFELRGLADQPSFDQVGRIISQSVGMFVNEIFDELYVCYNHHVNSLTSQVRVQRMLPISDLVAEEAAEEGVTGFELEPNRHVILEQLLPQFTESLIYGAIIDAKTAEHAAGMTAMQTATDNAKHVINDLTIQYNRARQAAITQEITEIVAGANALE</sequence>
<dbReference type="EMBL" id="FM204883">
    <property type="protein sequence ID" value="CAW93435.1"/>
    <property type="molecule type" value="Genomic_DNA"/>
</dbReference>
<dbReference type="RefSeq" id="WP_012678111.1">
    <property type="nucleotide sequence ID" value="NC_012471.1"/>
</dbReference>
<dbReference type="SMR" id="C0M719"/>
<dbReference type="KEGG" id="seu:SEQ_0920"/>
<dbReference type="HOGENOM" id="CLU_050669_0_1_9"/>
<dbReference type="OrthoDB" id="9812769at2"/>
<dbReference type="Proteomes" id="UP000001365">
    <property type="component" value="Chromosome"/>
</dbReference>
<dbReference type="GO" id="GO:0005886">
    <property type="term" value="C:plasma membrane"/>
    <property type="evidence" value="ECO:0007669"/>
    <property type="project" value="UniProtKB-SubCell"/>
</dbReference>
<dbReference type="GO" id="GO:0045259">
    <property type="term" value="C:proton-transporting ATP synthase complex"/>
    <property type="evidence" value="ECO:0007669"/>
    <property type="project" value="UniProtKB-KW"/>
</dbReference>
<dbReference type="GO" id="GO:0005524">
    <property type="term" value="F:ATP binding"/>
    <property type="evidence" value="ECO:0007669"/>
    <property type="project" value="UniProtKB-UniRule"/>
</dbReference>
<dbReference type="GO" id="GO:0046933">
    <property type="term" value="F:proton-transporting ATP synthase activity, rotational mechanism"/>
    <property type="evidence" value="ECO:0007669"/>
    <property type="project" value="UniProtKB-UniRule"/>
</dbReference>
<dbReference type="GO" id="GO:0042777">
    <property type="term" value="P:proton motive force-driven plasma membrane ATP synthesis"/>
    <property type="evidence" value="ECO:0007669"/>
    <property type="project" value="UniProtKB-UniRule"/>
</dbReference>
<dbReference type="CDD" id="cd12151">
    <property type="entry name" value="F1-ATPase_gamma"/>
    <property type="match status" value="1"/>
</dbReference>
<dbReference type="FunFam" id="3.40.1380.10:FF:000002">
    <property type="entry name" value="ATP synthase gamma chain"/>
    <property type="match status" value="1"/>
</dbReference>
<dbReference type="Gene3D" id="3.40.1380.10">
    <property type="match status" value="1"/>
</dbReference>
<dbReference type="Gene3D" id="1.10.287.80">
    <property type="entry name" value="ATP synthase, gamma subunit, helix hairpin domain"/>
    <property type="match status" value="1"/>
</dbReference>
<dbReference type="HAMAP" id="MF_00815">
    <property type="entry name" value="ATP_synth_gamma_bact"/>
    <property type="match status" value="1"/>
</dbReference>
<dbReference type="InterPro" id="IPR035968">
    <property type="entry name" value="ATP_synth_F1_ATPase_gsu"/>
</dbReference>
<dbReference type="InterPro" id="IPR000131">
    <property type="entry name" value="ATP_synth_F1_gsu"/>
</dbReference>
<dbReference type="InterPro" id="IPR023632">
    <property type="entry name" value="ATP_synth_F1_gsu_CS"/>
</dbReference>
<dbReference type="NCBIfam" id="TIGR01146">
    <property type="entry name" value="ATPsyn_F1gamma"/>
    <property type="match status" value="1"/>
</dbReference>
<dbReference type="NCBIfam" id="NF004147">
    <property type="entry name" value="PRK05621.2-1"/>
    <property type="match status" value="1"/>
</dbReference>
<dbReference type="PANTHER" id="PTHR11693">
    <property type="entry name" value="ATP SYNTHASE GAMMA CHAIN"/>
    <property type="match status" value="1"/>
</dbReference>
<dbReference type="PANTHER" id="PTHR11693:SF22">
    <property type="entry name" value="ATP SYNTHASE SUBUNIT GAMMA, MITOCHONDRIAL"/>
    <property type="match status" value="1"/>
</dbReference>
<dbReference type="Pfam" id="PF00231">
    <property type="entry name" value="ATP-synt"/>
    <property type="match status" value="1"/>
</dbReference>
<dbReference type="PRINTS" id="PR00126">
    <property type="entry name" value="ATPASEGAMMA"/>
</dbReference>
<dbReference type="SUPFAM" id="SSF52943">
    <property type="entry name" value="ATP synthase (F1-ATPase), gamma subunit"/>
    <property type="match status" value="1"/>
</dbReference>
<dbReference type="PROSITE" id="PS00153">
    <property type="entry name" value="ATPASE_GAMMA"/>
    <property type="match status" value="1"/>
</dbReference>
<organism>
    <name type="scientific">Streptococcus equi subsp. equi (strain 4047)</name>
    <dbReference type="NCBI Taxonomy" id="553482"/>
    <lineage>
        <taxon>Bacteria</taxon>
        <taxon>Bacillati</taxon>
        <taxon>Bacillota</taxon>
        <taxon>Bacilli</taxon>
        <taxon>Lactobacillales</taxon>
        <taxon>Streptococcaceae</taxon>
        <taxon>Streptococcus</taxon>
    </lineage>
</organism>
<protein>
    <recommendedName>
        <fullName evidence="1">ATP synthase gamma chain</fullName>
    </recommendedName>
    <alternativeName>
        <fullName evidence="1">ATP synthase F1 sector gamma subunit</fullName>
    </alternativeName>
    <alternativeName>
        <fullName evidence="1">F-ATPase gamma subunit</fullName>
    </alternativeName>
</protein>
<keyword id="KW-0066">ATP synthesis</keyword>
<keyword id="KW-1003">Cell membrane</keyword>
<keyword id="KW-0139">CF(1)</keyword>
<keyword id="KW-0375">Hydrogen ion transport</keyword>
<keyword id="KW-0406">Ion transport</keyword>
<keyword id="KW-0472">Membrane</keyword>
<keyword id="KW-0813">Transport</keyword>
<evidence type="ECO:0000255" key="1">
    <source>
        <dbReference type="HAMAP-Rule" id="MF_00815"/>
    </source>
</evidence>
<accession>C0M719</accession>
<gene>
    <name evidence="1" type="primary">atpG</name>
    <name type="ordered locus">SEQ_0920</name>
</gene>
<name>ATPG_STRE4</name>
<proteinExistence type="inferred from homology"/>
<reference key="1">
    <citation type="journal article" date="2009" name="PLoS Pathog.">
        <title>Genomic evidence for the evolution of Streptococcus equi: host restriction, increased virulence, and genetic exchange with human pathogens.</title>
        <authorList>
            <person name="Holden M.T.G."/>
            <person name="Heather Z."/>
            <person name="Paillot R."/>
            <person name="Steward K.F."/>
            <person name="Webb K."/>
            <person name="Ainslie F."/>
            <person name="Jourdan T."/>
            <person name="Bason N.C."/>
            <person name="Holroyd N.E."/>
            <person name="Mungall K."/>
            <person name="Quail M.A."/>
            <person name="Sanders M."/>
            <person name="Simmonds M."/>
            <person name="Willey D."/>
            <person name="Brooks K."/>
            <person name="Aanensen D.M."/>
            <person name="Spratt B.G."/>
            <person name="Jolley K.A."/>
            <person name="Maiden M.C.J."/>
            <person name="Kehoe M."/>
            <person name="Chanter N."/>
            <person name="Bentley S.D."/>
            <person name="Robinson C."/>
            <person name="Maskell D.J."/>
            <person name="Parkhill J."/>
            <person name="Waller A.S."/>
        </authorList>
    </citation>
    <scope>NUCLEOTIDE SEQUENCE [LARGE SCALE GENOMIC DNA]</scope>
    <source>
        <strain>4047</strain>
    </source>
</reference>
<feature type="chain" id="PRO_1000148638" description="ATP synthase gamma chain">
    <location>
        <begin position="1"/>
        <end position="291"/>
    </location>
</feature>